<accession>B7EZJ7</accession>
<accession>A0A0P0VG80</accession>
<feature type="transit peptide" description="Mitochondrion" evidence="1">
    <location>
        <begin position="1"/>
        <end position="29"/>
    </location>
</feature>
<feature type="chain" id="PRO_0000387479" description="23.6 kDa heat shock protein, mitochondrial">
    <location>
        <begin position="30"/>
        <end position="219"/>
    </location>
</feature>
<feature type="domain" description="sHSP" evidence="2">
    <location>
        <begin position="104"/>
        <end position="219"/>
    </location>
</feature>
<keyword id="KW-0496">Mitochondrion</keyword>
<keyword id="KW-1185">Reference proteome</keyword>
<keyword id="KW-0346">Stress response</keyword>
<keyword id="KW-0809">Transit peptide</keyword>
<gene>
    <name type="primary">HSP23.6</name>
    <name type="ordered locus">Os02g0201000</name>
    <name type="ordered locus">LOC_Os02g10710</name>
    <name type="ORF">P0419A09.16-1</name>
</gene>
<evidence type="ECO:0000255" key="1"/>
<evidence type="ECO:0000255" key="2">
    <source>
        <dbReference type="PROSITE-ProRule" id="PRU00285"/>
    </source>
</evidence>
<evidence type="ECO:0000269" key="3">
    <source>
    </source>
</evidence>
<evidence type="ECO:0000305" key="4"/>
<organism>
    <name type="scientific">Oryza sativa subsp. japonica</name>
    <name type="common">Rice</name>
    <dbReference type="NCBI Taxonomy" id="39947"/>
    <lineage>
        <taxon>Eukaryota</taxon>
        <taxon>Viridiplantae</taxon>
        <taxon>Streptophyta</taxon>
        <taxon>Embryophyta</taxon>
        <taxon>Tracheophyta</taxon>
        <taxon>Spermatophyta</taxon>
        <taxon>Magnoliopsida</taxon>
        <taxon>Liliopsida</taxon>
        <taxon>Poales</taxon>
        <taxon>Poaceae</taxon>
        <taxon>BOP clade</taxon>
        <taxon>Oryzoideae</taxon>
        <taxon>Oryzeae</taxon>
        <taxon>Oryzinae</taxon>
        <taxon>Oryza</taxon>
        <taxon>Oryza sativa</taxon>
    </lineage>
</organism>
<proteinExistence type="evidence at transcript level"/>
<comment type="subunit">
    <text>May form oligomeric structures.</text>
</comment>
<comment type="subcellular location">
    <subcellularLocation>
        <location evidence="4">Mitochondrion</location>
    </subcellularLocation>
</comment>
<comment type="induction">
    <text evidence="3">By heat shock.</text>
</comment>
<comment type="similarity">
    <text evidence="2">Belongs to the small heat shock protein (HSP20) family.</text>
</comment>
<sequence>MALARQCLSKRLAAGCALARPLHAASPVAAAAANSHGPLNFRALFSSAGADAAATTGGCAPAKGDGHSREVAVVDRSRRRWPWRDLRDFVPLRLVDGIGSALSQVAETLTRPLTGKVREDEERYRLRFEVPGLGKDDVRVYVDDGVLAIHGEKRDVVEEDRGRDGDGECWAAATYHAGLLLPEDAVAEGITAEVRDGVLHVTVPRSPERKRSVTEVKVR</sequence>
<name>HS23M_ORYSJ</name>
<dbReference type="EMBL" id="AP004869">
    <property type="status" value="NOT_ANNOTATED_CDS"/>
    <property type="molecule type" value="Genomic_DNA"/>
</dbReference>
<dbReference type="EMBL" id="AP014958">
    <property type="protein sequence ID" value="BAS77516.1"/>
    <property type="molecule type" value="Genomic_DNA"/>
</dbReference>
<dbReference type="EMBL" id="AK106682">
    <property type="protein sequence ID" value="BAG97794.1"/>
    <property type="molecule type" value="mRNA"/>
</dbReference>
<dbReference type="SMR" id="B7EZJ7"/>
<dbReference type="FunCoup" id="B7EZJ7">
    <property type="interactions" value="251"/>
</dbReference>
<dbReference type="STRING" id="39947.B7EZJ7"/>
<dbReference type="PaxDb" id="39947-B7EZJ7"/>
<dbReference type="EnsemblPlants" id="Os02t0201000-02">
    <property type="protein sequence ID" value="Os02t0201000-02"/>
    <property type="gene ID" value="Os02g0201000"/>
</dbReference>
<dbReference type="GeneID" id="107278626"/>
<dbReference type="Gramene" id="Os02t0201000-02">
    <property type="protein sequence ID" value="Os02t0201000-02"/>
    <property type="gene ID" value="Os02g0201000"/>
</dbReference>
<dbReference type="KEGG" id="osa:107278626"/>
<dbReference type="eggNOG" id="KOG0710">
    <property type="taxonomic scope" value="Eukaryota"/>
</dbReference>
<dbReference type="HOGENOM" id="CLU_096987_1_0_1"/>
<dbReference type="InParanoid" id="B7EZJ7"/>
<dbReference type="OrthoDB" id="1431247at2759"/>
<dbReference type="Proteomes" id="UP000000763">
    <property type="component" value="Chromosome 2"/>
</dbReference>
<dbReference type="Proteomes" id="UP000059680">
    <property type="component" value="Chromosome 2"/>
</dbReference>
<dbReference type="ExpressionAtlas" id="B7EZJ7">
    <property type="expression patterns" value="baseline and differential"/>
</dbReference>
<dbReference type="GO" id="GO:0005739">
    <property type="term" value="C:mitochondrion"/>
    <property type="evidence" value="ECO:0007669"/>
    <property type="project" value="UniProtKB-SubCell"/>
</dbReference>
<dbReference type="GO" id="GO:0009408">
    <property type="term" value="P:response to heat"/>
    <property type="evidence" value="ECO:0000270"/>
    <property type="project" value="UniProtKB"/>
</dbReference>
<dbReference type="CDD" id="cd06464">
    <property type="entry name" value="ACD_sHsps-like"/>
    <property type="match status" value="1"/>
</dbReference>
<dbReference type="FunFam" id="2.60.40.790:FF:000085">
    <property type="entry name" value="23.6 kDa heat shock protein, mitochondrial"/>
    <property type="match status" value="1"/>
</dbReference>
<dbReference type="Gene3D" id="2.60.40.790">
    <property type="match status" value="1"/>
</dbReference>
<dbReference type="InterPro" id="IPR002068">
    <property type="entry name" value="A-crystallin/Hsp20_dom"/>
</dbReference>
<dbReference type="InterPro" id="IPR008978">
    <property type="entry name" value="HSP20-like_chaperone"/>
</dbReference>
<dbReference type="InterPro" id="IPR044587">
    <property type="entry name" value="HSP21-like"/>
</dbReference>
<dbReference type="PANTHER" id="PTHR46733">
    <property type="entry name" value="26.5 KDA HEAT SHOCK PROTEIN, MITOCHONDRIAL"/>
    <property type="match status" value="1"/>
</dbReference>
<dbReference type="PANTHER" id="PTHR46733:SF3">
    <property type="entry name" value="26.5 KDA HEAT SHOCK PROTEIN, MITOCHONDRIAL"/>
    <property type="match status" value="1"/>
</dbReference>
<dbReference type="Pfam" id="PF00011">
    <property type="entry name" value="HSP20"/>
    <property type="match status" value="1"/>
</dbReference>
<dbReference type="SUPFAM" id="SSF49764">
    <property type="entry name" value="HSP20-like chaperones"/>
    <property type="match status" value="1"/>
</dbReference>
<dbReference type="PROSITE" id="PS01031">
    <property type="entry name" value="SHSP"/>
    <property type="match status" value="1"/>
</dbReference>
<reference key="1">
    <citation type="journal article" date="2005" name="Nature">
        <title>The map-based sequence of the rice genome.</title>
        <authorList>
            <consortium name="International rice genome sequencing project (IRGSP)"/>
        </authorList>
    </citation>
    <scope>NUCLEOTIDE SEQUENCE [LARGE SCALE GENOMIC DNA]</scope>
    <source>
        <strain>cv. Nipponbare</strain>
    </source>
</reference>
<reference key="2">
    <citation type="journal article" date="2013" name="Rice">
        <title>Improvement of the Oryza sativa Nipponbare reference genome using next generation sequence and optical map data.</title>
        <authorList>
            <person name="Kawahara Y."/>
            <person name="de la Bastide M."/>
            <person name="Hamilton J.P."/>
            <person name="Kanamori H."/>
            <person name="McCombie W.R."/>
            <person name="Ouyang S."/>
            <person name="Schwartz D.C."/>
            <person name="Tanaka T."/>
            <person name="Wu J."/>
            <person name="Zhou S."/>
            <person name="Childs K.L."/>
            <person name="Davidson R.M."/>
            <person name="Lin H."/>
            <person name="Quesada-Ocampo L."/>
            <person name="Vaillancourt B."/>
            <person name="Sakai H."/>
            <person name="Lee S.S."/>
            <person name="Kim J."/>
            <person name="Numa H."/>
            <person name="Itoh T."/>
            <person name="Buell C.R."/>
            <person name="Matsumoto T."/>
        </authorList>
    </citation>
    <scope>GENOME REANNOTATION</scope>
    <source>
        <strain>cv. Nipponbare</strain>
    </source>
</reference>
<reference key="3">
    <citation type="journal article" date="2003" name="Science">
        <title>Collection, mapping, and annotation of over 28,000 cDNA clones from japonica rice.</title>
        <authorList>
            <consortium name="The rice full-length cDNA consortium"/>
        </authorList>
    </citation>
    <scope>NUCLEOTIDE SEQUENCE [LARGE SCALE MRNA]</scope>
    <source>
        <strain>cv. Nipponbare</strain>
    </source>
</reference>
<reference key="4">
    <citation type="journal article" date="2009" name="BMC Genomics">
        <title>Rice sHsp genes: genomic organization and expression profiling under stress and development.</title>
        <authorList>
            <person name="Sarkar N.K."/>
            <person name="Kim Y.-K."/>
            <person name="Grover A."/>
        </authorList>
    </citation>
    <scope>INDUCTION</scope>
    <scope>GENE FAMILY</scope>
</reference>
<protein>
    <recommendedName>
        <fullName>23.6 kDa heat shock protein, mitochondrial</fullName>
        <shortName>OsHsp23.6</shortName>
    </recommendedName>
</protein>